<feature type="chain" id="PRO_0000375711" description="Succinyl-diaminopimelate desuccinylase">
    <location>
        <begin position="1"/>
        <end position="375"/>
    </location>
</feature>
<feature type="active site" evidence="1">
    <location>
        <position position="68"/>
    </location>
</feature>
<feature type="active site" description="Proton acceptor" evidence="1">
    <location>
        <position position="133"/>
    </location>
</feature>
<feature type="binding site" evidence="1">
    <location>
        <position position="66"/>
    </location>
    <ligand>
        <name>Zn(2+)</name>
        <dbReference type="ChEBI" id="CHEBI:29105"/>
        <label>1</label>
    </ligand>
</feature>
<feature type="binding site" evidence="1">
    <location>
        <position position="99"/>
    </location>
    <ligand>
        <name>Zn(2+)</name>
        <dbReference type="ChEBI" id="CHEBI:29105"/>
        <label>1</label>
    </ligand>
</feature>
<feature type="binding site" evidence="1">
    <location>
        <position position="99"/>
    </location>
    <ligand>
        <name>Zn(2+)</name>
        <dbReference type="ChEBI" id="CHEBI:29105"/>
        <label>2</label>
    </ligand>
</feature>
<feature type="binding site" evidence="1">
    <location>
        <position position="134"/>
    </location>
    <ligand>
        <name>Zn(2+)</name>
        <dbReference type="ChEBI" id="CHEBI:29105"/>
        <label>2</label>
    </ligand>
</feature>
<feature type="binding site" evidence="1">
    <location>
        <position position="162"/>
    </location>
    <ligand>
        <name>Zn(2+)</name>
        <dbReference type="ChEBI" id="CHEBI:29105"/>
        <label>1</label>
    </ligand>
</feature>
<feature type="binding site" evidence="1">
    <location>
        <position position="348"/>
    </location>
    <ligand>
        <name>Zn(2+)</name>
        <dbReference type="ChEBI" id="CHEBI:29105"/>
        <label>2</label>
    </ligand>
</feature>
<comment type="function">
    <text evidence="1">Catalyzes the hydrolysis of N-succinyl-L,L-diaminopimelic acid (SDAP), forming succinate and LL-2,6-diaminopimelate (DAP), an intermediate involved in the bacterial biosynthesis of lysine and meso-diaminopimelic acid, an essential component of bacterial cell walls.</text>
</comment>
<comment type="catalytic activity">
    <reaction evidence="1">
        <text>N-succinyl-(2S,6S)-2,6-diaminopimelate + H2O = (2S,6S)-2,6-diaminopimelate + succinate</text>
        <dbReference type="Rhea" id="RHEA:22608"/>
        <dbReference type="ChEBI" id="CHEBI:15377"/>
        <dbReference type="ChEBI" id="CHEBI:30031"/>
        <dbReference type="ChEBI" id="CHEBI:57609"/>
        <dbReference type="ChEBI" id="CHEBI:58087"/>
        <dbReference type="EC" id="3.5.1.18"/>
    </reaction>
</comment>
<comment type="cofactor">
    <cofactor evidence="1">
        <name>Zn(2+)</name>
        <dbReference type="ChEBI" id="CHEBI:29105"/>
    </cofactor>
    <cofactor evidence="1">
        <name>Co(2+)</name>
        <dbReference type="ChEBI" id="CHEBI:48828"/>
    </cofactor>
    <text evidence="1">Binds 2 Zn(2+) or Co(2+) ions per subunit.</text>
</comment>
<comment type="pathway">
    <text evidence="1">Amino-acid biosynthesis; L-lysine biosynthesis via DAP pathway; LL-2,6-diaminopimelate from (S)-tetrahydrodipicolinate (succinylase route): step 3/3.</text>
</comment>
<comment type="subunit">
    <text evidence="1">Homodimer.</text>
</comment>
<comment type="similarity">
    <text evidence="1">Belongs to the peptidase M20A family. DapE subfamily.</text>
</comment>
<accession>B5F0L0</accession>
<sequence>MSCPVIELTQQLIRRPSLSPDDAGCQALMIERLRKIGFTIEHMDFGDTQNFWAWRGRGETLAFAGHTDVVPAGDVDRWINPPFEPTIRDGMLFGRGAADMKGSLAAMVVAAERFVAQHPHHRGRLAFLITSDEEASAKNGTVKVVEALMARHERLDYCLVGEPSSTEIVGDVVKNGRRGSLTCNLTIHGVQGHVAYPHLADNPVHRAAPFLNELVAIEWDRGNDFFPATSMQVANIQAGTGSNNVIPGELFVQFNFRFSTELTDEMIKERVHALLEKHQLRYTVDWWLSGQPFLTARGKLVDAVVNAIEHYNEIKPQLLTTGGTSDGRFIARMGAQVVELGPVNATIHKINECVNAADLQLLARMYQRIMEQLVA</sequence>
<evidence type="ECO:0000255" key="1">
    <source>
        <dbReference type="HAMAP-Rule" id="MF_01690"/>
    </source>
</evidence>
<dbReference type="EC" id="3.5.1.18" evidence="1"/>
<dbReference type="EMBL" id="CP001138">
    <property type="protein sequence ID" value="ACH52649.1"/>
    <property type="molecule type" value="Genomic_DNA"/>
</dbReference>
<dbReference type="RefSeq" id="WP_001277822.1">
    <property type="nucleotide sequence ID" value="NC_011149.1"/>
</dbReference>
<dbReference type="SMR" id="B5F0L0"/>
<dbReference type="MEROPS" id="M20.010"/>
<dbReference type="KEGG" id="sea:SeAg_B2627"/>
<dbReference type="HOGENOM" id="CLU_021802_4_0_6"/>
<dbReference type="UniPathway" id="UPA00034">
    <property type="reaction ID" value="UER00021"/>
</dbReference>
<dbReference type="Proteomes" id="UP000008819">
    <property type="component" value="Chromosome"/>
</dbReference>
<dbReference type="GO" id="GO:0008777">
    <property type="term" value="F:acetylornithine deacetylase activity"/>
    <property type="evidence" value="ECO:0007669"/>
    <property type="project" value="TreeGrafter"/>
</dbReference>
<dbReference type="GO" id="GO:0050897">
    <property type="term" value="F:cobalt ion binding"/>
    <property type="evidence" value="ECO:0007669"/>
    <property type="project" value="UniProtKB-UniRule"/>
</dbReference>
<dbReference type="GO" id="GO:0009014">
    <property type="term" value="F:succinyl-diaminopimelate desuccinylase activity"/>
    <property type="evidence" value="ECO:0007669"/>
    <property type="project" value="UniProtKB-UniRule"/>
</dbReference>
<dbReference type="GO" id="GO:0008270">
    <property type="term" value="F:zinc ion binding"/>
    <property type="evidence" value="ECO:0007669"/>
    <property type="project" value="UniProtKB-UniRule"/>
</dbReference>
<dbReference type="GO" id="GO:0019877">
    <property type="term" value="P:diaminopimelate biosynthetic process"/>
    <property type="evidence" value="ECO:0007669"/>
    <property type="project" value="UniProtKB-UniRule"/>
</dbReference>
<dbReference type="GO" id="GO:0006526">
    <property type="term" value="P:L-arginine biosynthetic process"/>
    <property type="evidence" value="ECO:0007669"/>
    <property type="project" value="TreeGrafter"/>
</dbReference>
<dbReference type="GO" id="GO:0009089">
    <property type="term" value="P:lysine biosynthetic process via diaminopimelate"/>
    <property type="evidence" value="ECO:0007669"/>
    <property type="project" value="UniProtKB-UniRule"/>
</dbReference>
<dbReference type="CDD" id="cd03891">
    <property type="entry name" value="M20_DapE_proteobac"/>
    <property type="match status" value="1"/>
</dbReference>
<dbReference type="FunFam" id="3.30.70.360:FF:000011">
    <property type="entry name" value="Succinyl-diaminopimelate desuccinylase"/>
    <property type="match status" value="1"/>
</dbReference>
<dbReference type="FunFam" id="3.40.630.10:FF:000005">
    <property type="entry name" value="Succinyl-diaminopimelate desuccinylase"/>
    <property type="match status" value="1"/>
</dbReference>
<dbReference type="FunFam" id="3.40.630.10:FF:000010">
    <property type="entry name" value="Succinyl-diaminopimelate desuccinylase"/>
    <property type="match status" value="1"/>
</dbReference>
<dbReference type="Gene3D" id="3.40.630.10">
    <property type="entry name" value="Zn peptidases"/>
    <property type="match status" value="2"/>
</dbReference>
<dbReference type="HAMAP" id="MF_01690">
    <property type="entry name" value="DapE"/>
    <property type="match status" value="1"/>
</dbReference>
<dbReference type="InterPro" id="IPR001261">
    <property type="entry name" value="ArgE/DapE_CS"/>
</dbReference>
<dbReference type="InterPro" id="IPR036264">
    <property type="entry name" value="Bact_exopeptidase_dim_dom"/>
</dbReference>
<dbReference type="InterPro" id="IPR005941">
    <property type="entry name" value="DapE_proteobac"/>
</dbReference>
<dbReference type="InterPro" id="IPR002933">
    <property type="entry name" value="Peptidase_M20"/>
</dbReference>
<dbReference type="InterPro" id="IPR011650">
    <property type="entry name" value="Peptidase_M20_dimer"/>
</dbReference>
<dbReference type="InterPro" id="IPR050072">
    <property type="entry name" value="Peptidase_M20A"/>
</dbReference>
<dbReference type="NCBIfam" id="TIGR01246">
    <property type="entry name" value="dapE_proteo"/>
    <property type="match status" value="1"/>
</dbReference>
<dbReference type="NCBIfam" id="NF009557">
    <property type="entry name" value="PRK13009.1"/>
    <property type="match status" value="1"/>
</dbReference>
<dbReference type="PANTHER" id="PTHR43808">
    <property type="entry name" value="ACETYLORNITHINE DEACETYLASE"/>
    <property type="match status" value="1"/>
</dbReference>
<dbReference type="PANTHER" id="PTHR43808:SF31">
    <property type="entry name" value="N-ACETYL-L-CITRULLINE DEACETYLASE"/>
    <property type="match status" value="1"/>
</dbReference>
<dbReference type="Pfam" id="PF07687">
    <property type="entry name" value="M20_dimer"/>
    <property type="match status" value="1"/>
</dbReference>
<dbReference type="Pfam" id="PF01546">
    <property type="entry name" value="Peptidase_M20"/>
    <property type="match status" value="1"/>
</dbReference>
<dbReference type="SUPFAM" id="SSF55031">
    <property type="entry name" value="Bacterial exopeptidase dimerisation domain"/>
    <property type="match status" value="1"/>
</dbReference>
<dbReference type="SUPFAM" id="SSF53187">
    <property type="entry name" value="Zn-dependent exopeptidases"/>
    <property type="match status" value="1"/>
</dbReference>
<dbReference type="PROSITE" id="PS00758">
    <property type="entry name" value="ARGE_DAPE_CPG2_1"/>
    <property type="match status" value="1"/>
</dbReference>
<dbReference type="PROSITE" id="PS00759">
    <property type="entry name" value="ARGE_DAPE_CPG2_2"/>
    <property type="match status" value="1"/>
</dbReference>
<gene>
    <name evidence="1" type="primary">dapE</name>
    <name type="ordered locus">SeAg_B2627</name>
</gene>
<proteinExistence type="inferred from homology"/>
<protein>
    <recommendedName>
        <fullName evidence="1">Succinyl-diaminopimelate desuccinylase</fullName>
        <shortName evidence="1">SDAP desuccinylase</shortName>
        <ecNumber evidence="1">3.5.1.18</ecNumber>
    </recommendedName>
    <alternativeName>
        <fullName evidence="1">N-succinyl-LL-2,6-diaminoheptanedioate amidohydrolase</fullName>
    </alternativeName>
</protein>
<reference key="1">
    <citation type="journal article" date="2011" name="J. Bacteriol.">
        <title>Comparative genomics of 28 Salmonella enterica isolates: evidence for CRISPR-mediated adaptive sublineage evolution.</title>
        <authorList>
            <person name="Fricke W.F."/>
            <person name="Mammel M.K."/>
            <person name="McDermott P.F."/>
            <person name="Tartera C."/>
            <person name="White D.G."/>
            <person name="Leclerc J.E."/>
            <person name="Ravel J."/>
            <person name="Cebula T.A."/>
        </authorList>
    </citation>
    <scope>NUCLEOTIDE SEQUENCE [LARGE SCALE GENOMIC DNA]</scope>
    <source>
        <strain>SL483</strain>
    </source>
</reference>
<organism>
    <name type="scientific">Salmonella agona (strain SL483)</name>
    <dbReference type="NCBI Taxonomy" id="454166"/>
    <lineage>
        <taxon>Bacteria</taxon>
        <taxon>Pseudomonadati</taxon>
        <taxon>Pseudomonadota</taxon>
        <taxon>Gammaproteobacteria</taxon>
        <taxon>Enterobacterales</taxon>
        <taxon>Enterobacteriaceae</taxon>
        <taxon>Salmonella</taxon>
    </lineage>
</organism>
<name>DAPE_SALA4</name>
<keyword id="KW-0028">Amino-acid biosynthesis</keyword>
<keyword id="KW-0170">Cobalt</keyword>
<keyword id="KW-0220">Diaminopimelate biosynthesis</keyword>
<keyword id="KW-0378">Hydrolase</keyword>
<keyword id="KW-0457">Lysine biosynthesis</keyword>
<keyword id="KW-0479">Metal-binding</keyword>
<keyword id="KW-0862">Zinc</keyword>